<dbReference type="EMBL" id="AB014876">
    <property type="protein sequence ID" value="BAA34291.1"/>
    <property type="molecule type" value="mRNA"/>
</dbReference>
<dbReference type="RefSeq" id="NP_001233732.1">
    <property type="nucleotide sequence ID" value="NM_001246803.2"/>
</dbReference>
<dbReference type="SMR" id="Q9Z313"/>
<dbReference type="IntAct" id="Q9Z313">
    <property type="interactions" value="1"/>
</dbReference>
<dbReference type="MINT" id="Q9Z313"/>
<dbReference type="PaxDb" id="10029-NP_001233732.1"/>
<dbReference type="Ensembl" id="ENSCGRT00001029001.1">
    <property type="protein sequence ID" value="ENSCGRP00001024755.1"/>
    <property type="gene ID" value="ENSCGRG00001022563.1"/>
</dbReference>
<dbReference type="GeneID" id="100689376"/>
<dbReference type="KEGG" id="cge:100689376"/>
<dbReference type="CTD" id="6137"/>
<dbReference type="eggNOG" id="KOG3295">
    <property type="taxonomic scope" value="Eukaryota"/>
</dbReference>
<dbReference type="GeneTree" id="ENSGT00390000007818"/>
<dbReference type="OrthoDB" id="10264538at2759"/>
<dbReference type="Proteomes" id="UP000694386">
    <property type="component" value="Unplaced"/>
</dbReference>
<dbReference type="Proteomes" id="UP001108280">
    <property type="component" value="Chromosome 3"/>
</dbReference>
<dbReference type="GO" id="GO:0005829">
    <property type="term" value="C:cytosol"/>
    <property type="evidence" value="ECO:0000250"/>
    <property type="project" value="UniProtKB"/>
</dbReference>
<dbReference type="GO" id="GO:0022625">
    <property type="term" value="C:cytosolic large ribosomal subunit"/>
    <property type="evidence" value="ECO:0007669"/>
    <property type="project" value="TreeGrafter"/>
</dbReference>
<dbReference type="GO" id="GO:0003723">
    <property type="term" value="F:RNA binding"/>
    <property type="evidence" value="ECO:0007669"/>
    <property type="project" value="TreeGrafter"/>
</dbReference>
<dbReference type="GO" id="GO:0003735">
    <property type="term" value="F:structural constituent of ribosome"/>
    <property type="evidence" value="ECO:0007669"/>
    <property type="project" value="InterPro"/>
</dbReference>
<dbReference type="GO" id="GO:0006412">
    <property type="term" value="P:translation"/>
    <property type="evidence" value="ECO:0007669"/>
    <property type="project" value="InterPro"/>
</dbReference>
<dbReference type="FunFam" id="1.20.5.110:FF:000003">
    <property type="entry name" value="60S ribosomal protein L13"/>
    <property type="match status" value="1"/>
</dbReference>
<dbReference type="Gene3D" id="1.20.5.110">
    <property type="match status" value="1"/>
</dbReference>
<dbReference type="HAMAP" id="MF_00499">
    <property type="entry name" value="Ribosomal_eL13"/>
    <property type="match status" value="1"/>
</dbReference>
<dbReference type="InterPro" id="IPR001380">
    <property type="entry name" value="Ribosomal_eL13"/>
</dbReference>
<dbReference type="InterPro" id="IPR018256">
    <property type="entry name" value="Ribosomal_eL13_CS"/>
</dbReference>
<dbReference type="PANTHER" id="PTHR11722">
    <property type="entry name" value="60S RIBOSOMAL PROTEIN L13"/>
    <property type="match status" value="1"/>
</dbReference>
<dbReference type="PANTHER" id="PTHR11722:SF0">
    <property type="entry name" value="LARGE RIBOSOMAL SUBUNIT PROTEIN EL13"/>
    <property type="match status" value="1"/>
</dbReference>
<dbReference type="Pfam" id="PF01294">
    <property type="entry name" value="Ribosomal_L13e"/>
    <property type="match status" value="1"/>
</dbReference>
<dbReference type="PROSITE" id="PS01104">
    <property type="entry name" value="RIBOSOMAL_L13E"/>
    <property type="match status" value="1"/>
</dbReference>
<organism>
    <name type="scientific">Cricetulus griseus</name>
    <name type="common">Chinese hamster</name>
    <name type="synonym">Cricetulus barabensis griseus</name>
    <dbReference type="NCBI Taxonomy" id="10029"/>
    <lineage>
        <taxon>Eukaryota</taxon>
        <taxon>Metazoa</taxon>
        <taxon>Chordata</taxon>
        <taxon>Craniata</taxon>
        <taxon>Vertebrata</taxon>
        <taxon>Euteleostomi</taxon>
        <taxon>Mammalia</taxon>
        <taxon>Eutheria</taxon>
        <taxon>Euarchontoglires</taxon>
        <taxon>Glires</taxon>
        <taxon>Rodentia</taxon>
        <taxon>Myomorpha</taxon>
        <taxon>Muroidea</taxon>
        <taxon>Cricetidae</taxon>
        <taxon>Cricetinae</taxon>
        <taxon>Cricetulus</taxon>
    </lineage>
</organism>
<proteinExistence type="evidence at transcript level"/>
<keyword id="KW-0007">Acetylation</keyword>
<keyword id="KW-0963">Cytoplasm</keyword>
<keyword id="KW-1017">Isopeptide bond</keyword>
<keyword id="KW-0597">Phosphoprotein</keyword>
<keyword id="KW-0687">Ribonucleoprotein</keyword>
<keyword id="KW-0689">Ribosomal protein</keyword>
<keyword id="KW-0832">Ubl conjugation</keyword>
<feature type="chain" id="PRO_0000192918" description="Large ribosomal subunit protein eL13">
    <location>
        <begin position="1"/>
        <end position="211"/>
    </location>
</feature>
<feature type="modified residue" description="N6-acetyllysine" evidence="1">
    <location>
        <position position="16"/>
    </location>
</feature>
<feature type="modified residue" description="Phosphoserine" evidence="1">
    <location>
        <position position="52"/>
    </location>
</feature>
<feature type="modified residue" description="Phosphoserine" evidence="1">
    <location>
        <position position="77"/>
    </location>
</feature>
<feature type="modified residue" description="Phosphoserine" evidence="1">
    <location>
        <position position="106"/>
    </location>
</feature>
<feature type="modified residue" description="N6-acetyllysine; alternate" evidence="1">
    <location>
        <position position="177"/>
    </location>
</feature>
<feature type="cross-link" description="Glycyl lysine isopeptide (Lys-Gly) (interchain with G-Cter in SUMO2)" evidence="1">
    <location>
        <position position="123"/>
    </location>
</feature>
<feature type="cross-link" description="Glycyl lysine isopeptide (Lys-Gly) (interchain with G-Cter in SUMO2)" evidence="1">
    <location>
        <position position="145"/>
    </location>
</feature>
<feature type="cross-link" description="Glycyl lysine isopeptide (Lys-Gly) (interchain with G-Cter in SUMO1); alternate" evidence="1">
    <location>
        <position position="174"/>
    </location>
</feature>
<feature type="cross-link" description="Glycyl lysine isopeptide (Lys-Gly) (interchain with G-Cter in SUMO2); alternate" evidence="1">
    <location>
        <position position="174"/>
    </location>
</feature>
<feature type="cross-link" description="Glycyl lysine isopeptide (Lys-Gly) (interchain with G-Cter in SUMO2); alternate" evidence="1">
    <location>
        <position position="177"/>
    </location>
</feature>
<protein>
    <recommendedName>
        <fullName evidence="2">Large ribosomal subunit protein eL13</fullName>
    </recommendedName>
    <alternativeName>
        <fullName>60S ribosomal protein L13</fullName>
    </alternativeName>
</protein>
<reference key="1">
    <citation type="submission" date="1998-05" db="EMBL/GenBank/DDBJ databases">
        <title>Identification of genes highly expressed in association with G2 arrest induced by DNA damage of Chinese hamster overy cells by differential display.</title>
        <authorList>
            <person name="Sasaki Y."/>
            <person name="Itoh F."/>
            <person name="Suzuki H."/>
            <person name="Hinoda Y."/>
            <person name="Imai K."/>
        </authorList>
    </citation>
    <scope>NUCLEOTIDE SEQUENCE [MRNA]</scope>
</reference>
<comment type="function">
    <text evidence="1">Component of the ribosome, a large ribonucleoprotein complex responsible for the synthesis of proteins in the cell. The small ribosomal subunit (SSU) binds messenger RNAs (mRNAs) and translates the encoded message by selecting cognate aminoacyl-transfer RNA (tRNA) molecules. The large subunit (LSU) contains the ribosomal catalytic site termed the peptidyl transferase center (PTC), which catalyzes the formation of peptide bonds, thereby polymerizing the amino acids delivered by tRNAs into a polypeptide chain. The nascent polypeptides leave the ribosome through a tunnel in the LSU and interact with protein factors that function in enzymatic processing, targeting, and the membrane insertion of nascent chains at the exit of the ribosomal tunnel. As part of the LSU, it is probably required for its formation and the maturation of rRNAs. Plays a role in bone development.</text>
</comment>
<comment type="subunit">
    <text evidence="1">Component of the 60S large ribosomal subunit (LSU).</text>
</comment>
<comment type="subcellular location">
    <subcellularLocation>
        <location evidence="1">Cytoplasm</location>
    </subcellularLocation>
</comment>
<comment type="similarity">
    <text evidence="2">Belongs to the eukaryotic ribosomal protein eL13 family.</text>
</comment>
<name>RL13_CRIGR</name>
<accession>Q9Z313</accession>
<evidence type="ECO:0000250" key="1">
    <source>
        <dbReference type="UniProtKB" id="P26373"/>
    </source>
</evidence>
<evidence type="ECO:0000305" key="2"/>
<gene>
    <name type="primary">RPL13</name>
</gene>
<sequence length="211" mass="24393">MAPSRNGMILKPHFHKDWQRRVDTWFNQPARKIRRRKARQAKARRIAPRPASGPIRPIVRCPTVRYHTKVRAGRGFSLEELRVAGIHKKVARTIGISVDPRRRNKSTESLQANVQRLKEYRSKLILFPRKPSAPKKGDSSAEELKLATQLTGPVMRIRNVYKKEKARVITEEEKNFKAFASLRMARANARLFGIRAKRAKEAAEQDVEKKK</sequence>